<gene>
    <name type="ORF">OSTLU_15891</name>
</gene>
<organism>
    <name type="scientific">Ostreococcus lucimarinus (strain CCE9901)</name>
    <dbReference type="NCBI Taxonomy" id="436017"/>
    <lineage>
        <taxon>Eukaryota</taxon>
        <taxon>Viridiplantae</taxon>
        <taxon>Chlorophyta</taxon>
        <taxon>Mamiellophyceae</taxon>
        <taxon>Mamiellales</taxon>
        <taxon>Bathycoccaceae</taxon>
        <taxon>Ostreococcus</taxon>
    </lineage>
</organism>
<reference key="1">
    <citation type="journal article" date="2007" name="Proc. Natl. Acad. Sci. U.S.A.">
        <title>The tiny eukaryote Ostreococcus provides genomic insights into the paradox of plankton speciation.</title>
        <authorList>
            <person name="Palenik B."/>
            <person name="Grimwood J."/>
            <person name="Aerts A."/>
            <person name="Rouze P."/>
            <person name="Salamov A."/>
            <person name="Putnam N."/>
            <person name="Dupont C."/>
            <person name="Jorgensen R."/>
            <person name="Derelle E."/>
            <person name="Rombauts S."/>
            <person name="Zhou K."/>
            <person name="Otillar R."/>
            <person name="Merchant S.S."/>
            <person name="Podell S."/>
            <person name="Gaasterland T."/>
            <person name="Napoli C."/>
            <person name="Gendler K."/>
            <person name="Manuell A."/>
            <person name="Tai V."/>
            <person name="Vallon O."/>
            <person name="Piganeau G."/>
            <person name="Jancek S."/>
            <person name="Heijde M."/>
            <person name="Jabbari K."/>
            <person name="Bowler C."/>
            <person name="Lohr M."/>
            <person name="Robbens S."/>
            <person name="Werner G."/>
            <person name="Dubchak I."/>
            <person name="Pazour G.J."/>
            <person name="Ren Q."/>
            <person name="Paulsen I."/>
            <person name="Delwiche C."/>
            <person name="Schmutz J."/>
            <person name="Rokhsar D."/>
            <person name="Van de Peer Y."/>
            <person name="Moreau H."/>
            <person name="Grigoriev I.V."/>
        </authorList>
    </citation>
    <scope>NUCLEOTIDE SEQUENCE [LARGE SCALE GENOMIC DNA]</scope>
    <source>
        <strain>CCE9901</strain>
    </source>
</reference>
<name>GUFP_OSTLU</name>
<accession>A4RZA6</accession>
<keyword id="KW-0150">Chloroplast</keyword>
<keyword id="KW-0342">GTP-binding</keyword>
<keyword id="KW-0378">Hydrolase</keyword>
<keyword id="KW-0547">Nucleotide-binding</keyword>
<keyword id="KW-0934">Plastid</keyword>
<keyword id="KW-0648">Protein biosynthesis</keyword>
<keyword id="KW-1185">Reference proteome</keyword>
<proteinExistence type="inferred from homology"/>
<protein>
    <recommendedName>
        <fullName evidence="1">Translation factor GUF1 homolog, chloroplastic</fullName>
        <ecNumber>3.6.5.-</ecNumber>
    </recommendedName>
    <alternativeName>
        <fullName evidence="1">Elongation factor 4 homolog</fullName>
        <shortName evidence="1">EF-4</shortName>
    </alternativeName>
    <alternativeName>
        <fullName evidence="1">GTPase GUF1 homolog</fullName>
    </alternativeName>
    <alternativeName>
        <fullName evidence="1">Ribosomal back-translocase</fullName>
    </alternativeName>
</protein>
<comment type="function">
    <text evidence="1">Promotes chloroplast protein synthesis. May act as a fidelity factor of the translation reaction, by catalyzing a one-codon backward translocation of tRNAs on improperly translocated ribosomes.</text>
</comment>
<comment type="catalytic activity">
    <reaction evidence="1">
        <text>GTP + H2O = GDP + phosphate + H(+)</text>
        <dbReference type="Rhea" id="RHEA:19669"/>
        <dbReference type="ChEBI" id="CHEBI:15377"/>
        <dbReference type="ChEBI" id="CHEBI:15378"/>
        <dbReference type="ChEBI" id="CHEBI:37565"/>
        <dbReference type="ChEBI" id="CHEBI:43474"/>
        <dbReference type="ChEBI" id="CHEBI:58189"/>
    </reaction>
</comment>
<comment type="subcellular location">
    <subcellularLocation>
        <location evidence="1">Plastid</location>
        <location evidence="1">Chloroplast</location>
    </subcellularLocation>
</comment>
<comment type="miscellaneous">
    <text evidence="1">This protein may be expected to contain an N-terminal transit peptide but none has been predicted.</text>
</comment>
<comment type="similarity">
    <text evidence="1">Belongs to the TRAFAC class translation factor GTPase superfamily. Classic translation factor GTPase family. LepA subfamily.</text>
</comment>
<dbReference type="EC" id="3.6.5.-"/>
<dbReference type="EMBL" id="CP000586">
    <property type="protein sequence ID" value="ABO96590.1"/>
    <property type="molecule type" value="Genomic_DNA"/>
</dbReference>
<dbReference type="RefSeq" id="XP_001418297.1">
    <property type="nucleotide sequence ID" value="XM_001418260.1"/>
</dbReference>
<dbReference type="SMR" id="A4RZA6"/>
<dbReference type="STRING" id="436017.A4RZA6"/>
<dbReference type="EnsemblPlants" id="ABO96590">
    <property type="protein sequence ID" value="ABO96590"/>
    <property type="gene ID" value="OSTLU_15891"/>
</dbReference>
<dbReference type="GeneID" id="5002177"/>
<dbReference type="Gramene" id="ABO96590">
    <property type="protein sequence ID" value="ABO96590"/>
    <property type="gene ID" value="OSTLU_15891"/>
</dbReference>
<dbReference type="KEGG" id="olu:OSTLU_15891"/>
<dbReference type="eggNOG" id="KOG0462">
    <property type="taxonomic scope" value="Eukaryota"/>
</dbReference>
<dbReference type="HOGENOM" id="CLU_009995_3_3_1"/>
<dbReference type="OMA" id="EYSFVGY"/>
<dbReference type="OrthoDB" id="1074at2759"/>
<dbReference type="Proteomes" id="UP000001568">
    <property type="component" value="Chromosome 6"/>
</dbReference>
<dbReference type="GO" id="GO:0009507">
    <property type="term" value="C:chloroplast"/>
    <property type="evidence" value="ECO:0007669"/>
    <property type="project" value="UniProtKB-SubCell"/>
</dbReference>
<dbReference type="GO" id="GO:0005525">
    <property type="term" value="F:GTP binding"/>
    <property type="evidence" value="ECO:0007669"/>
    <property type="project" value="UniProtKB-UniRule"/>
</dbReference>
<dbReference type="GO" id="GO:0003924">
    <property type="term" value="F:GTPase activity"/>
    <property type="evidence" value="ECO:0007669"/>
    <property type="project" value="UniProtKB-UniRule"/>
</dbReference>
<dbReference type="GO" id="GO:0003729">
    <property type="term" value="F:mRNA binding"/>
    <property type="evidence" value="ECO:0007669"/>
    <property type="project" value="EnsemblPlants"/>
</dbReference>
<dbReference type="GO" id="GO:0019904">
    <property type="term" value="F:protein domain specific binding"/>
    <property type="evidence" value="ECO:0007669"/>
    <property type="project" value="EnsemblPlants"/>
</dbReference>
<dbReference type="GO" id="GO:0043022">
    <property type="term" value="F:ribosome binding"/>
    <property type="evidence" value="ECO:0007669"/>
    <property type="project" value="TreeGrafter"/>
</dbReference>
<dbReference type="GO" id="GO:0045727">
    <property type="term" value="P:positive regulation of translation"/>
    <property type="evidence" value="ECO:0007669"/>
    <property type="project" value="UniProtKB-UniRule"/>
</dbReference>
<dbReference type="GO" id="GO:0006412">
    <property type="term" value="P:translation"/>
    <property type="evidence" value="ECO:0007669"/>
    <property type="project" value="UniProtKB-KW"/>
</dbReference>
<dbReference type="CDD" id="cd03699">
    <property type="entry name" value="EF4_II"/>
    <property type="match status" value="1"/>
</dbReference>
<dbReference type="CDD" id="cd16260">
    <property type="entry name" value="EF4_III"/>
    <property type="match status" value="1"/>
</dbReference>
<dbReference type="CDD" id="cd01890">
    <property type="entry name" value="LepA"/>
    <property type="match status" value="1"/>
</dbReference>
<dbReference type="CDD" id="cd03709">
    <property type="entry name" value="lepA_C"/>
    <property type="match status" value="1"/>
</dbReference>
<dbReference type="FunFam" id="3.40.50.300:FF:000078">
    <property type="entry name" value="Elongation factor 4"/>
    <property type="match status" value="1"/>
</dbReference>
<dbReference type="FunFam" id="2.40.30.10:FF:000015">
    <property type="entry name" value="Translation factor GUF1, mitochondrial"/>
    <property type="match status" value="1"/>
</dbReference>
<dbReference type="FunFam" id="3.30.70.2570:FF:000001">
    <property type="entry name" value="Translation factor GUF1, mitochondrial"/>
    <property type="match status" value="1"/>
</dbReference>
<dbReference type="FunFam" id="3.30.70.870:FF:000004">
    <property type="entry name" value="Translation factor GUF1, mitochondrial"/>
    <property type="match status" value="1"/>
</dbReference>
<dbReference type="Gene3D" id="3.30.70.240">
    <property type="match status" value="1"/>
</dbReference>
<dbReference type="Gene3D" id="3.30.70.2570">
    <property type="entry name" value="Elongation factor 4, C-terminal domain"/>
    <property type="match status" value="1"/>
</dbReference>
<dbReference type="Gene3D" id="3.30.70.870">
    <property type="entry name" value="Elongation Factor G (Translational Gtpase), domain 3"/>
    <property type="match status" value="1"/>
</dbReference>
<dbReference type="Gene3D" id="3.40.50.300">
    <property type="entry name" value="P-loop containing nucleotide triphosphate hydrolases"/>
    <property type="match status" value="1"/>
</dbReference>
<dbReference type="Gene3D" id="2.40.30.10">
    <property type="entry name" value="Translation factors"/>
    <property type="match status" value="1"/>
</dbReference>
<dbReference type="HAMAP" id="MF_03138">
    <property type="entry name" value="GUFP"/>
    <property type="match status" value="1"/>
</dbReference>
<dbReference type="HAMAP" id="MF_00071">
    <property type="entry name" value="LepA"/>
    <property type="match status" value="1"/>
</dbReference>
<dbReference type="InterPro" id="IPR006297">
    <property type="entry name" value="EF-4"/>
</dbReference>
<dbReference type="InterPro" id="IPR035647">
    <property type="entry name" value="EFG_III/V"/>
</dbReference>
<dbReference type="InterPro" id="IPR000640">
    <property type="entry name" value="EFG_V-like"/>
</dbReference>
<dbReference type="InterPro" id="IPR004161">
    <property type="entry name" value="EFTu-like_2"/>
</dbReference>
<dbReference type="InterPro" id="IPR031157">
    <property type="entry name" value="G_TR_CS"/>
</dbReference>
<dbReference type="InterPro" id="IPR027518">
    <property type="entry name" value="GUFP"/>
</dbReference>
<dbReference type="InterPro" id="IPR038363">
    <property type="entry name" value="LepA_C_sf"/>
</dbReference>
<dbReference type="InterPro" id="IPR013842">
    <property type="entry name" value="LepA_CTD"/>
</dbReference>
<dbReference type="InterPro" id="IPR035654">
    <property type="entry name" value="LepA_IV"/>
</dbReference>
<dbReference type="InterPro" id="IPR027417">
    <property type="entry name" value="P-loop_NTPase"/>
</dbReference>
<dbReference type="InterPro" id="IPR005225">
    <property type="entry name" value="Small_GTP-bd"/>
</dbReference>
<dbReference type="InterPro" id="IPR000795">
    <property type="entry name" value="T_Tr_GTP-bd_dom"/>
</dbReference>
<dbReference type="InterPro" id="IPR009000">
    <property type="entry name" value="Transl_B-barrel_sf"/>
</dbReference>
<dbReference type="NCBIfam" id="TIGR01393">
    <property type="entry name" value="lepA"/>
    <property type="match status" value="1"/>
</dbReference>
<dbReference type="NCBIfam" id="TIGR00231">
    <property type="entry name" value="small_GTP"/>
    <property type="match status" value="1"/>
</dbReference>
<dbReference type="PANTHER" id="PTHR43512:SF4">
    <property type="entry name" value="TRANSLATION FACTOR GUF1 HOMOLOG, CHLOROPLASTIC"/>
    <property type="match status" value="1"/>
</dbReference>
<dbReference type="PANTHER" id="PTHR43512">
    <property type="entry name" value="TRANSLATION FACTOR GUF1-RELATED"/>
    <property type="match status" value="1"/>
</dbReference>
<dbReference type="Pfam" id="PF00679">
    <property type="entry name" value="EFG_C"/>
    <property type="match status" value="1"/>
</dbReference>
<dbReference type="Pfam" id="PF00009">
    <property type="entry name" value="GTP_EFTU"/>
    <property type="match status" value="1"/>
</dbReference>
<dbReference type="Pfam" id="PF03144">
    <property type="entry name" value="GTP_EFTU_D2"/>
    <property type="match status" value="1"/>
</dbReference>
<dbReference type="Pfam" id="PF06421">
    <property type="entry name" value="LepA_C"/>
    <property type="match status" value="1"/>
</dbReference>
<dbReference type="PRINTS" id="PR00315">
    <property type="entry name" value="ELONGATNFCT"/>
</dbReference>
<dbReference type="SUPFAM" id="SSF54980">
    <property type="entry name" value="EF-G C-terminal domain-like"/>
    <property type="match status" value="2"/>
</dbReference>
<dbReference type="SUPFAM" id="SSF52540">
    <property type="entry name" value="P-loop containing nucleoside triphosphate hydrolases"/>
    <property type="match status" value="1"/>
</dbReference>
<dbReference type="SUPFAM" id="SSF50447">
    <property type="entry name" value="Translation proteins"/>
    <property type="match status" value="1"/>
</dbReference>
<dbReference type="PROSITE" id="PS00301">
    <property type="entry name" value="G_TR_1"/>
    <property type="match status" value="1"/>
</dbReference>
<dbReference type="PROSITE" id="PS51722">
    <property type="entry name" value="G_TR_2"/>
    <property type="match status" value="1"/>
</dbReference>
<feature type="chain" id="PRO_0000402917" description="Translation factor GUF1 homolog, chloroplastic">
    <location>
        <begin position="1"/>
        <end position="605"/>
    </location>
</feature>
<feature type="domain" description="tr-type G">
    <location>
        <begin position="7"/>
        <end position="189"/>
    </location>
</feature>
<feature type="binding site" evidence="1">
    <location>
        <begin position="16"/>
        <end position="23"/>
    </location>
    <ligand>
        <name>GTP</name>
        <dbReference type="ChEBI" id="CHEBI:37565"/>
    </ligand>
</feature>
<feature type="binding site" evidence="1">
    <location>
        <begin position="82"/>
        <end position="86"/>
    </location>
    <ligand>
        <name>GTP</name>
        <dbReference type="ChEBI" id="CHEBI:37565"/>
    </ligand>
</feature>
<feature type="binding site" evidence="1">
    <location>
        <begin position="136"/>
        <end position="139"/>
    </location>
    <ligand>
        <name>GTP</name>
        <dbReference type="ChEBI" id="CHEBI:37565"/>
    </ligand>
</feature>
<sequence>MASLPARRIRNFSIIAHIDHGKSTLADTLLMRTKTVKERDMVKQVLDSMDLERERGITIKLNSARMDYVASDGELYVLNLIDTPGHVDFSYEVSRSLAACEGALLVVDSSQGVEAQTVANVYLALENDLEIFTVLNKIDLAGSEPDRVKQEIEDVLGLDASDAILASAKANIGMDDILERIVQVVPPPRDTANEPLRALIFDSYFDPYRGVVAVFRVMDGTMKTGDAMKMMATGATFAADEIGIMRPDKVPVKELGPGEVGYIIGGIKSVADARVGDTITLSKNPAAEALPGYSKSVPMVFAGIFPTDTDRYDDLRESLQRLQINDCSLSFEPEQNSAMGTGFRCGFLGLLHMEIIQERLEREYDLDLITTAPSVVYNVYRTDGTMDSISNPADLCPPELRERIEEPYCRLDMIAPSDYVGTLMELASQRRGEFIDMTYLSETRTSIKYDIPLAEVVTNYFDDMKSRSRGYASMEYAITGYRQSDLVRLDVLINQEPADPLAVITHRDRAYSIGRQLVDKLKELIPRQMFRIPIQAAIGNKVIAATSISAMRKDVTAKCYGGDISRKKKLLKKQAAGKKRMKQFGKVEVPQDAFLAVLSVDGAAD</sequence>
<evidence type="ECO:0000255" key="1">
    <source>
        <dbReference type="HAMAP-Rule" id="MF_03138"/>
    </source>
</evidence>